<feature type="chain" id="PRO_0000433800" description="Mitogen-activated protein kinase kinase kinase nsy-1" evidence="18">
    <location>
        <begin position="1"/>
        <end position="1498"/>
    </location>
</feature>
<feature type="domain" description="Protein kinase" evidence="2">
    <location>
        <begin position="664"/>
        <end position="925"/>
    </location>
</feature>
<feature type="region of interest" description="Disordered" evidence="3">
    <location>
        <begin position="1"/>
        <end position="35"/>
    </location>
</feature>
<feature type="region of interest" description="Disordered" evidence="3">
    <location>
        <begin position="190"/>
        <end position="209"/>
    </location>
</feature>
<feature type="region of interest" description="Disordered" evidence="3">
    <location>
        <begin position="1022"/>
        <end position="1050"/>
    </location>
</feature>
<feature type="region of interest" description="Disordered" evidence="3">
    <location>
        <begin position="1461"/>
        <end position="1498"/>
    </location>
</feature>
<feature type="coiled-coil region" evidence="1">
    <location>
        <begin position="1276"/>
        <end position="1314"/>
    </location>
</feature>
<feature type="compositionally biased region" description="Pro residues" evidence="3">
    <location>
        <begin position="22"/>
        <end position="33"/>
    </location>
</feature>
<feature type="compositionally biased region" description="Low complexity" evidence="3">
    <location>
        <begin position="1031"/>
        <end position="1042"/>
    </location>
</feature>
<feature type="compositionally biased region" description="Basic and acidic residues" evidence="3">
    <location>
        <begin position="1469"/>
        <end position="1479"/>
    </location>
</feature>
<feature type="active site" description="Proton acceptor" evidence="2">
    <location>
        <position position="790"/>
    </location>
</feature>
<feature type="binding site" evidence="2">
    <location>
        <begin position="670"/>
        <end position="678"/>
    </location>
    <ligand>
        <name>ATP</name>
        <dbReference type="ChEBI" id="CHEBI:30616"/>
    </ligand>
</feature>
<feature type="binding site" evidence="2">
    <location>
        <position position="693"/>
    </location>
    <ligand>
        <name>ATP</name>
        <dbReference type="ChEBI" id="CHEBI:30616"/>
    </ligand>
</feature>
<feature type="mutagenesis site" description="Loss of kinase activity." evidence="4 5">
    <original>K</original>
    <variation>M</variation>
    <location>
        <position position="693"/>
    </location>
</feature>
<feature type="mutagenesis site" description="In ag3; reduces survival and reduces pmk-1 phosphorylation in response to the heavy metal arsenite." evidence="16">
    <location>
        <begin position="1003"/>
        <end position="1498"/>
    </location>
</feature>
<reference evidence="18" key="1">
    <citation type="journal article" date="2002" name="Science">
        <title>A conserved p38 MAP kinase pathway in Caenorhabditis elegans innate immunity.</title>
        <authorList>
            <person name="Kim D.H."/>
            <person name="Feinbaum R."/>
            <person name="Alloing G."/>
            <person name="Emerson F.E."/>
            <person name="Garsin D.A."/>
            <person name="Inoue H."/>
            <person name="Tanaka-Hino M."/>
            <person name="Hisamoto N."/>
            <person name="Matsumoto K."/>
            <person name="Tan M.-W."/>
            <person name="Ausubel F.M."/>
        </authorList>
    </citation>
    <scope>NUCLEOTIDE SEQUENCE [MRNA]</scope>
    <scope>FUNCTION</scope>
</reference>
<reference evidence="19" key="2">
    <citation type="journal article" date="1998" name="Science">
        <title>Genome sequence of the nematode C. elegans: a platform for investigating biology.</title>
        <authorList>
            <consortium name="The C. elegans sequencing consortium"/>
        </authorList>
    </citation>
    <scope>NUCLEOTIDE SEQUENCE [LARGE SCALE GENOMIC DNA]</scope>
    <source>
        <strain evidence="19">Bristol N2</strain>
    </source>
</reference>
<reference evidence="18" key="3">
    <citation type="journal article" date="2001" name="Cell">
        <title>The CaMKII UNC-43 activates the MAPKKK NSY-1 to execute a lateral signaling decision required for asymmetric olfactory neuron fates.</title>
        <authorList>
            <person name="Sagasti A."/>
            <person name="Hisamoto N."/>
            <person name="Hyodo J."/>
            <person name="Tanaka-Hino M."/>
            <person name="Matsumoto K."/>
            <person name="Bargmann C.I."/>
        </authorList>
    </citation>
    <scope>FUNCTION</scope>
    <scope>CATALYTIC ACTIVITY</scope>
    <scope>INTERACTION WITH UNC-43</scope>
    <scope>TISSUE SPECIFICITY</scope>
    <scope>MUTAGENESIS OF LYS-693</scope>
</reference>
<reference evidence="18" key="4">
    <citation type="journal article" date="2002" name="EMBO Rep.">
        <title>SEK-1 MAPKK mediates Ca2+ signaling to determine neuronal asymmetric development in Caenorhabditis elegans.</title>
        <authorList>
            <person name="Tanaka-Hino M."/>
            <person name="Sagasti A."/>
            <person name="Hisamoto N."/>
            <person name="Kawasaki M."/>
            <person name="Nakano S."/>
            <person name="Ninomiya-Tsuji J."/>
            <person name="Bargmann C.I."/>
            <person name="Matsumoto K."/>
        </authorList>
    </citation>
    <scope>FUNCTION</scope>
    <scope>CATALYTIC ACTIVITY</scope>
    <scope>COFACTOR</scope>
    <scope>INTERACTION WITH SEK-1</scope>
    <scope>MUTAGENESIS OF LYS-693</scope>
</reference>
<reference evidence="18" key="5">
    <citation type="journal article" date="2005" name="Genes Dev.">
        <title>A Toll-interleukin 1 repeat protein at the synapse specifies asymmetric odorant receptor expression via ASK1 MAPKKK signaling.</title>
        <authorList>
            <person name="Chuang C.-F."/>
            <person name="Bargmann C.I."/>
        </authorList>
    </citation>
    <scope>FUNCTION</scope>
    <scope>SUBCELLULAR LOCATION</scope>
</reference>
<reference evidence="18" key="6">
    <citation type="journal article" date="2005" name="Mech. Ageing Dev.">
        <title>The p38 signal transduction pathway participates in the oxidative stress-mediated translocation of DAF-16 to Caenorhabditis elegans nuclei.</title>
        <authorList>
            <person name="Kondo M."/>
            <person name="Yanase S."/>
            <person name="Ishii T."/>
            <person name="Hartman P.S."/>
            <person name="Matsumoto K."/>
            <person name="Ishii N."/>
        </authorList>
    </citation>
    <scope>FUNCTION</scope>
</reference>
<reference evidence="18" key="7">
    <citation type="journal article" date="2008" name="Curr. Biol.">
        <title>Distinct innate immune responses to infection and wounding in the C. elegans epidermis.</title>
        <authorList>
            <person name="Pujol N."/>
            <person name="Cypowyj S."/>
            <person name="Ziegler K."/>
            <person name="Millet A."/>
            <person name="Astrain A."/>
            <person name="Goncharov A."/>
            <person name="Jin Y."/>
            <person name="Chisholm A.D."/>
            <person name="Ewbank J.J."/>
        </authorList>
    </citation>
    <scope>FUNCTION</scope>
</reference>
<reference evidence="18" key="8">
    <citation type="journal article" date="2009" name="Chem. Biol. Interact.">
        <title>Copper-induced germline apoptosis in Caenorhabditis elegans: the independent roles of DNA damage response signaling and the dependent roles of MAPK cascades.</title>
        <authorList>
            <person name="Wang S."/>
            <person name="Wu L."/>
            <person name="Wang Y."/>
            <person name="Luo X."/>
            <person name="Lu Y."/>
        </authorList>
    </citation>
    <scope>FUNCTION</scope>
</reference>
<reference key="9">
    <citation type="journal article" date="2010" name="PLoS Pathog.">
        <title>Caenorhabditis elegans N-glycan core beta-galactoside confers sensitivity towards nematotoxic fungal galectin CGL2.</title>
        <authorList>
            <person name="Butschi A."/>
            <person name="Titz A."/>
            <person name="Waelti M.A."/>
            <person name="Olieric V."/>
            <person name="Paschinger K."/>
            <person name="Noebauer K."/>
            <person name="Guo X."/>
            <person name="Seeberger P.H."/>
            <person name="Wilson I.B."/>
            <person name="Aebi M."/>
            <person name="Hengartner M.O."/>
            <person name="Kuenzler M."/>
        </authorList>
    </citation>
    <scope>FUNCTION</scope>
</reference>
<reference key="10">
    <citation type="journal article" date="2011" name="Genetics">
        <title>Regulation of anoxic death in Caenorhabditis elegans by mammalian apoptosis signal-regulating kinase (ASK) family proteins.</title>
        <authorList>
            <person name="Hayakawa T."/>
            <person name="Kato K."/>
            <person name="Hayakawa R."/>
            <person name="Hisamoto N."/>
            <person name="Matsumoto K."/>
            <person name="Takeda K."/>
            <person name="Ichijo H."/>
        </authorList>
    </citation>
    <scope>FUNCTION</scope>
    <scope>DISRUPTION PHENOTYPE</scope>
</reference>
<reference key="11">
    <citation type="journal article" date="2011" name="PLoS Pathog.">
        <title>Ce-Duox1/BLI-3 generated reactive oxygen species trigger protective SKN-1 activity via p38 MAPK signaling during infection in C. elegans.</title>
        <authorList>
            <person name="Hoeven R.V."/>
            <person name="McCallum K.C."/>
            <person name="Cruz M.R."/>
            <person name="Garsin D.A."/>
        </authorList>
    </citation>
    <scope>FUNCTION</scope>
    <scope>DISRUPTION PHENOTYPE</scope>
</reference>
<reference key="12">
    <citation type="journal article" date="2012" name="J. Biol. Chem.">
        <title>Stabilization of RNT-1 protein, runt-related transcription factor (RUNX) protein homolog of Caenorhabditis elegans, by oxidative stress through mitogen-activated protein kinase pathway.</title>
        <authorList>
            <person name="Lee K."/>
            <person name="Shim J."/>
            <person name="Bae J."/>
            <person name="Kim Y.J."/>
            <person name="Lee J."/>
        </authorList>
    </citation>
    <scope>FUNCTION</scope>
    <scope>DISRUPTION PHENOTYPE</scope>
</reference>
<reference key="13">
    <citation type="journal article" date="2014" name="BMC Biol.">
        <title>Genome-wide screening identifies new genes required for stress-induced phase 2 detoxification gene expression in animals.</title>
        <authorList>
            <person name="Crook-McMahon H.M."/>
            <person name="Olahova M."/>
            <person name="Button E.L."/>
            <person name="Winter J.J."/>
            <person name="Veal E.A."/>
        </authorList>
    </citation>
    <scope>FUNCTION</scope>
    <scope>MUTAGENESIS OF 1003-GLN--ASN-1498</scope>
</reference>
<reference key="14">
    <citation type="journal article" date="2014" name="Sci. Signal.">
        <title>Roquin-2 promotes ubiquitin-mediated degradation of ASK1 to regulate stress responses.</title>
        <authorList>
            <person name="Maruyama T."/>
            <person name="Araki T."/>
            <person name="Kawarazaki Y."/>
            <person name="Naguro I."/>
            <person name="Heynen S."/>
            <person name="Aza-Blanc P."/>
            <person name="Ronai Z."/>
            <person name="Matsuzawa A."/>
            <person name="Ichijo H."/>
        </authorList>
    </citation>
    <scope>FUNCTION</scope>
    <scope>PHOSPHORYLATION</scope>
</reference>
<proteinExistence type="evidence at protein level"/>
<gene>
    <name evidence="20" type="primary">nsy-1</name>
    <name evidence="20" type="ORF">F59A6.1</name>
</gene>
<evidence type="ECO:0000255" key="1"/>
<evidence type="ECO:0000255" key="2">
    <source>
        <dbReference type="PROSITE-ProRule" id="PRU00159"/>
    </source>
</evidence>
<evidence type="ECO:0000256" key="3">
    <source>
        <dbReference type="SAM" id="MobiDB-lite"/>
    </source>
</evidence>
<evidence type="ECO:0000269" key="4">
    <source>
    </source>
</evidence>
<evidence type="ECO:0000269" key="5">
    <source>
    </source>
</evidence>
<evidence type="ECO:0000269" key="6">
    <source>
    </source>
</evidence>
<evidence type="ECO:0000269" key="7">
    <source>
    </source>
</evidence>
<evidence type="ECO:0000269" key="8">
    <source>
    </source>
</evidence>
<evidence type="ECO:0000269" key="9">
    <source>
    </source>
</evidence>
<evidence type="ECO:0000269" key="10">
    <source>
    </source>
</evidence>
<evidence type="ECO:0000269" key="11">
    <source>
    </source>
</evidence>
<evidence type="ECO:0000269" key="12">
    <source>
    </source>
</evidence>
<evidence type="ECO:0000269" key="13">
    <source>
    </source>
</evidence>
<evidence type="ECO:0000269" key="14">
    <source>
    </source>
</evidence>
<evidence type="ECO:0000269" key="15">
    <source>
    </source>
</evidence>
<evidence type="ECO:0000269" key="16">
    <source>
    </source>
</evidence>
<evidence type="ECO:0000303" key="17">
    <source>
    </source>
</evidence>
<evidence type="ECO:0000305" key="18"/>
<evidence type="ECO:0000312" key="19">
    <source>
        <dbReference type="Proteomes" id="UP000001940"/>
    </source>
</evidence>
<evidence type="ECO:0000312" key="20">
    <source>
        <dbReference type="WormBase" id="F59A6.1a"/>
    </source>
</evidence>
<comment type="function">
    <text evidence="4 5 6 7 8 9 10 11 12 13 14 15 16">Serine/threonine-protein kinase which, by phosphorylating and activating sek-1, plays an important role in the activation of the p38 pathway also composed of the downstream effectors sek-1 and pmk-1 (PubMed:11751572, PubMed:12142542, PubMed:21212236, PubMed:24448648). Downstream of CaMKII unc-43 and adapter protein tir-1, plays a role in determining asymmetric cell fates in olfactory AWC neurons during neuronal development. Activation results in the repression of odorant receptor str-2 expression in one of the 2 AWC neurons (PubMed:11336672, PubMed:11751572, PubMed:15625192). Involved in resistance to pathogenic Gram-positive and Gram-negative bacterial and fungal infection (PubMed:12142542, PubMed:18394898, PubMed:24448648). Involved in resistance to the nematotoxic C.cinerea galectin Cgl2 (PubMed:20062796). Probably by activating the sek1/pmk-1/skn-1 pathway, involved in the up-regulation of gcs-1 and glutathione-S-transferase gst-4 expression upon bacterial infection (PubMed:22216003). Probably downstream of tir-1 and nipi-3, required for the expression of antimicrobial peptide nlp-29 in the epidermis in response to fungal infection or physical injury (PubMed:18394898). Plays a role in resistance to several environmental stresses including oxidative, protein misfolding (ER) and osmotic stresses, and DNA-damaging reagents (PubMed:15888317, PubMed:21212236). Plays a role in the stabilization of transcription factor rnt-1 in the intestine during oxidative stress (PubMed:22308034). Involved in germline apoptosis induced by heavy metals, such as Cu(2+) (PubMed:19497412). In addition, plays a role in the up-regulation of gcs-1 upon arsenite treatment, most likely through activation of pmk-1, to confer protection against toxicity induced by heavy metals (PubMed:25204677). Plays a role downstream of tir-1 in regulating susceptibility to anoxia (PubMed:21212236). Involved in egg laying (PubMed:12142542).</text>
</comment>
<comment type="catalytic activity">
    <reaction evidence="4 5">
        <text>L-seryl-[protein] + ATP = O-phospho-L-seryl-[protein] + ADP + H(+)</text>
        <dbReference type="Rhea" id="RHEA:17989"/>
        <dbReference type="Rhea" id="RHEA-COMP:9863"/>
        <dbReference type="Rhea" id="RHEA-COMP:11604"/>
        <dbReference type="ChEBI" id="CHEBI:15378"/>
        <dbReference type="ChEBI" id="CHEBI:29999"/>
        <dbReference type="ChEBI" id="CHEBI:30616"/>
        <dbReference type="ChEBI" id="CHEBI:83421"/>
        <dbReference type="ChEBI" id="CHEBI:456216"/>
        <dbReference type="EC" id="2.7.11.25"/>
    </reaction>
</comment>
<comment type="catalytic activity">
    <reaction evidence="4 5">
        <text>L-threonyl-[protein] + ATP = O-phospho-L-threonyl-[protein] + ADP + H(+)</text>
        <dbReference type="Rhea" id="RHEA:46608"/>
        <dbReference type="Rhea" id="RHEA-COMP:11060"/>
        <dbReference type="Rhea" id="RHEA-COMP:11605"/>
        <dbReference type="ChEBI" id="CHEBI:15378"/>
        <dbReference type="ChEBI" id="CHEBI:30013"/>
        <dbReference type="ChEBI" id="CHEBI:30616"/>
        <dbReference type="ChEBI" id="CHEBI:61977"/>
        <dbReference type="ChEBI" id="CHEBI:456216"/>
        <dbReference type="EC" id="2.7.11.25"/>
    </reaction>
</comment>
<comment type="cofactor">
    <cofactor evidence="5">
        <name>Mg(2+)</name>
        <dbReference type="ChEBI" id="CHEBI:18420"/>
    </cofactor>
</comment>
<comment type="subunit">
    <text evidence="4 5">Interacts with unc-43 (PubMed:11336672). Interacts with sek-1 (PubMed:11751572).</text>
</comment>
<comment type="subcellular location">
    <subcellularLocation>
        <location evidence="7">Cell projection</location>
        <location evidence="7">Axon</location>
    </subcellularLocation>
    <subcellularLocation>
        <location evidence="7">Perikaryon</location>
    </subcellularLocation>
    <text evidence="7">Localizes to post-synaptic regions and is enriched in punctate structures in AWC neuron axon where co-localizes with tir-1. Localization is regulated by tir-1.</text>
</comment>
<comment type="tissue specificity">
    <text evidence="4">Expressed in intestine, hypodermis, rectal gland cell and neurons including sensory AWC neurons.</text>
</comment>
<comment type="PTM">
    <text evidence="15">May be phosphorylated upon pathogenic bacterial infection. May be regulated by proteasomal degradation mediated by the E3-ubiquitin ligase rle-1.</text>
</comment>
<comment type="disruption phenotype">
    <text evidence="12 13 14">RNAi-mediated knockdown results in an increase in survival rate in anoxic conditions (PubMed:21212236). Upon infection by P.aeruginosa and E.faecalis, RNAi-mediated knockdown results in a moderate reduction in the up-regulation of gst-4 and gcs-1 expression (PubMed:22216003). Causes a severe reduction in rnt-1 accumulation in the intestine during oxidative stress mediated by paraquat (PubMed:22308034).</text>
</comment>
<comment type="similarity">
    <text evidence="18">Belongs to the protein kinase superfamily. STE Ser/Thr protein kinase family. MAP kinase kinase kinase subfamily.</text>
</comment>
<dbReference type="EC" id="2.7.11.25" evidence="4 5"/>
<dbReference type="EMBL" id="BX284602">
    <property type="protein sequence ID" value="CCD70472.1"/>
    <property type="molecule type" value="Genomic_DNA"/>
</dbReference>
<dbReference type="RefSeq" id="NP_001293513.1">
    <property type="nucleotide sequence ID" value="NM_001306584.1"/>
</dbReference>
<dbReference type="RefSeq" id="NP_001370698.1">
    <property type="nucleotide sequence ID" value="NM_001383826.1"/>
</dbReference>
<dbReference type="SMR" id="Q21029"/>
<dbReference type="FunCoup" id="Q21029">
    <property type="interactions" value="1450"/>
</dbReference>
<dbReference type="IntAct" id="Q21029">
    <property type="interactions" value="1"/>
</dbReference>
<dbReference type="STRING" id="6239.F59A6.1a.1"/>
<dbReference type="PaxDb" id="6239-F59A6.1"/>
<dbReference type="PeptideAtlas" id="Q21029"/>
<dbReference type="EnsemblMetazoa" id="F59A6.1a.1">
    <property type="protein sequence ID" value="F59A6.1a.1"/>
    <property type="gene ID" value="WBGene00003822"/>
</dbReference>
<dbReference type="GeneID" id="24104671"/>
<dbReference type="UCSC" id="F59A6.1">
    <property type="organism name" value="c. elegans"/>
</dbReference>
<dbReference type="AGR" id="WB:WBGene00003822"/>
<dbReference type="WormBase" id="F59A6.1a">
    <property type="protein sequence ID" value="CE44901"/>
    <property type="gene ID" value="WBGene00003822"/>
    <property type="gene designation" value="nsy-1"/>
</dbReference>
<dbReference type="eggNOG" id="KOG4279">
    <property type="taxonomic scope" value="Eukaryota"/>
</dbReference>
<dbReference type="GeneTree" id="ENSGT00940000171895"/>
<dbReference type="HOGENOM" id="CLU_003687_1_1_1"/>
<dbReference type="InParanoid" id="Q21029"/>
<dbReference type="OMA" id="CLAHSKN"/>
<dbReference type="OrthoDB" id="275301at2759"/>
<dbReference type="PhylomeDB" id="Q21029"/>
<dbReference type="Reactome" id="R-CEL-2559580">
    <property type="pathway name" value="Oxidative Stress Induced Senescence"/>
</dbReference>
<dbReference type="SignaLink" id="Q21029"/>
<dbReference type="PRO" id="PR:Q21029"/>
<dbReference type="Proteomes" id="UP000001940">
    <property type="component" value="Chromosome II"/>
</dbReference>
<dbReference type="Bgee" id="WBGene00003822">
    <property type="expression patterns" value="Expressed in pharyngeal muscle cell (C elegans) and 4 other cell types or tissues"/>
</dbReference>
<dbReference type="ExpressionAtlas" id="Q21029">
    <property type="expression patterns" value="baseline and differential"/>
</dbReference>
<dbReference type="GO" id="GO:1904115">
    <property type="term" value="C:axon cytoplasm"/>
    <property type="evidence" value="ECO:0000314"/>
    <property type="project" value="WormBase"/>
</dbReference>
<dbReference type="GO" id="GO:0005737">
    <property type="term" value="C:cytoplasm"/>
    <property type="evidence" value="ECO:0000314"/>
    <property type="project" value="WormBase"/>
</dbReference>
<dbReference type="GO" id="GO:0043025">
    <property type="term" value="C:neuronal cell body"/>
    <property type="evidence" value="ECO:0000314"/>
    <property type="project" value="WormBase"/>
</dbReference>
<dbReference type="GO" id="GO:0043204">
    <property type="term" value="C:perikaryon"/>
    <property type="evidence" value="ECO:0007669"/>
    <property type="project" value="UniProtKB-SubCell"/>
</dbReference>
<dbReference type="GO" id="GO:0014069">
    <property type="term" value="C:postsynaptic density"/>
    <property type="evidence" value="ECO:0000314"/>
    <property type="project" value="WormBase"/>
</dbReference>
<dbReference type="GO" id="GO:0005524">
    <property type="term" value="F:ATP binding"/>
    <property type="evidence" value="ECO:0007669"/>
    <property type="project" value="UniProtKB-KW"/>
</dbReference>
<dbReference type="GO" id="GO:0004709">
    <property type="term" value="F:MAP kinase kinase kinase activity"/>
    <property type="evidence" value="ECO:0000314"/>
    <property type="project" value="WormBase"/>
</dbReference>
<dbReference type="GO" id="GO:0046872">
    <property type="term" value="F:metal ion binding"/>
    <property type="evidence" value="ECO:0007669"/>
    <property type="project" value="UniProtKB-KW"/>
</dbReference>
<dbReference type="GO" id="GO:0031434">
    <property type="term" value="F:mitogen-activated protein kinase kinase binding"/>
    <property type="evidence" value="ECO:0000353"/>
    <property type="project" value="WormBase"/>
</dbReference>
<dbReference type="GO" id="GO:0004672">
    <property type="term" value="F:protein kinase activity"/>
    <property type="evidence" value="ECO:0000318"/>
    <property type="project" value="GO_Central"/>
</dbReference>
<dbReference type="GO" id="GO:0106310">
    <property type="term" value="F:protein serine kinase activity"/>
    <property type="evidence" value="ECO:0007669"/>
    <property type="project" value="RHEA"/>
</dbReference>
<dbReference type="GO" id="GO:0004712">
    <property type="term" value="F:protein serine/threonine/tyrosine kinase activity"/>
    <property type="evidence" value="ECO:0000314"/>
    <property type="project" value="WormBase"/>
</dbReference>
<dbReference type="GO" id="GO:0140367">
    <property type="term" value="P:antibacterial innate immune response"/>
    <property type="evidence" value="ECO:0000315"/>
    <property type="project" value="WormBase"/>
</dbReference>
<dbReference type="GO" id="GO:0045165">
    <property type="term" value="P:cell fate commitment"/>
    <property type="evidence" value="ECO:0000315"/>
    <property type="project" value="WormBase"/>
</dbReference>
<dbReference type="GO" id="GO:0006935">
    <property type="term" value="P:chemotaxis"/>
    <property type="evidence" value="ECO:0000315"/>
    <property type="project" value="WormBase"/>
</dbReference>
<dbReference type="GO" id="GO:0050832">
    <property type="term" value="P:defense response to fungus"/>
    <property type="evidence" value="ECO:0000315"/>
    <property type="project" value="UniProtKB"/>
</dbReference>
<dbReference type="GO" id="GO:0050829">
    <property type="term" value="P:defense response to Gram-negative bacterium"/>
    <property type="evidence" value="ECO:0000315"/>
    <property type="project" value="WormBase"/>
</dbReference>
<dbReference type="GO" id="GO:0050830">
    <property type="term" value="P:defense response to Gram-positive bacterium"/>
    <property type="evidence" value="ECO:0000315"/>
    <property type="project" value="WormBase"/>
</dbReference>
<dbReference type="GO" id="GO:0008340">
    <property type="term" value="P:determination of adult lifespan"/>
    <property type="evidence" value="ECO:0000315"/>
    <property type="project" value="UniProtKB"/>
</dbReference>
<dbReference type="GO" id="GO:0035545">
    <property type="term" value="P:determination of left/right asymmetry in nervous system"/>
    <property type="evidence" value="ECO:0000315"/>
    <property type="project" value="WormBase"/>
</dbReference>
<dbReference type="GO" id="GO:0018991">
    <property type="term" value="P:egg-laying behavior"/>
    <property type="evidence" value="ECO:0000315"/>
    <property type="project" value="UniProtKB"/>
</dbReference>
<dbReference type="GO" id="GO:0045087">
    <property type="term" value="P:innate immune response"/>
    <property type="evidence" value="ECO:0000315"/>
    <property type="project" value="WormBase"/>
</dbReference>
<dbReference type="GO" id="GO:0007254">
    <property type="term" value="P:JNK cascade"/>
    <property type="evidence" value="ECO:0000318"/>
    <property type="project" value="GO_Central"/>
</dbReference>
<dbReference type="GO" id="GO:0000165">
    <property type="term" value="P:MAPK cascade"/>
    <property type="evidence" value="ECO:0000316"/>
    <property type="project" value="WormBase"/>
</dbReference>
<dbReference type="GO" id="GO:0038066">
    <property type="term" value="P:p38MAPK cascade"/>
    <property type="evidence" value="ECO:0000315"/>
    <property type="project" value="WormBase"/>
</dbReference>
<dbReference type="GO" id="GO:1901046">
    <property type="term" value="P:positive regulation of egg-laying behavior"/>
    <property type="evidence" value="ECO:0000315"/>
    <property type="project" value="WormBase"/>
</dbReference>
<dbReference type="GO" id="GO:0010628">
    <property type="term" value="P:positive regulation of gene expression"/>
    <property type="evidence" value="ECO:0000315"/>
    <property type="project" value="UniProtKB"/>
</dbReference>
<dbReference type="GO" id="GO:0045944">
    <property type="term" value="P:positive regulation of transcription by RNA polymerase II"/>
    <property type="evidence" value="ECO:0000315"/>
    <property type="project" value="WormBase"/>
</dbReference>
<dbReference type="GO" id="GO:0093002">
    <property type="term" value="P:response to nematicide"/>
    <property type="evidence" value="ECO:0000304"/>
    <property type="project" value="UniProtKB"/>
</dbReference>
<dbReference type="GO" id="GO:0006979">
    <property type="term" value="P:response to oxidative stress"/>
    <property type="evidence" value="ECO:0000315"/>
    <property type="project" value="UniProtKB"/>
</dbReference>
<dbReference type="GO" id="GO:0042594">
    <property type="term" value="P:response to starvation"/>
    <property type="evidence" value="ECO:0000315"/>
    <property type="project" value="UniProtKB"/>
</dbReference>
<dbReference type="CDD" id="cd06624">
    <property type="entry name" value="STKc_ASK"/>
    <property type="match status" value="1"/>
</dbReference>
<dbReference type="FunFam" id="1.10.510.10:FF:000992">
    <property type="entry name" value="Mitogen-activated protein kinase kinase kinase nsy-1"/>
    <property type="match status" value="1"/>
</dbReference>
<dbReference type="FunFam" id="3.30.200.20:FF:000487">
    <property type="entry name" value="Serine/threonine protein kinase, putative"/>
    <property type="match status" value="1"/>
</dbReference>
<dbReference type="Gene3D" id="3.30.200.20">
    <property type="entry name" value="Phosphorylase Kinase, domain 1"/>
    <property type="match status" value="1"/>
</dbReference>
<dbReference type="Gene3D" id="1.10.510.10">
    <property type="entry name" value="Transferase(Phosphotransferase) domain 1"/>
    <property type="match status" value="1"/>
</dbReference>
<dbReference type="InterPro" id="IPR046872">
    <property type="entry name" value="DRHyd-ASK"/>
</dbReference>
<dbReference type="InterPro" id="IPR046873">
    <property type="entry name" value="HisK-N-like"/>
</dbReference>
<dbReference type="InterPro" id="IPR011009">
    <property type="entry name" value="Kinase-like_dom_sf"/>
</dbReference>
<dbReference type="InterPro" id="IPR043969">
    <property type="entry name" value="MAP3K_PH"/>
</dbReference>
<dbReference type="InterPro" id="IPR025136">
    <property type="entry name" value="MAP3K_TRAF-bd"/>
</dbReference>
<dbReference type="InterPro" id="IPR000719">
    <property type="entry name" value="Prot_kinase_dom"/>
</dbReference>
<dbReference type="InterPro" id="IPR017441">
    <property type="entry name" value="Protein_kinase_ATP_BS"/>
</dbReference>
<dbReference type="InterPro" id="IPR013761">
    <property type="entry name" value="SAM/pointed_sf"/>
</dbReference>
<dbReference type="InterPro" id="IPR008271">
    <property type="entry name" value="Ser/Thr_kinase_AS"/>
</dbReference>
<dbReference type="PANTHER" id="PTHR11584:SF394">
    <property type="entry name" value="APOPTOTIC SIGNAL-REGULATING KINASE 1, ISOFORM C"/>
    <property type="match status" value="1"/>
</dbReference>
<dbReference type="PANTHER" id="PTHR11584">
    <property type="entry name" value="SERINE/THREONINE PROTEIN KINASE"/>
    <property type="match status" value="1"/>
</dbReference>
<dbReference type="Pfam" id="PF19039">
    <property type="entry name" value="ASK_PH"/>
    <property type="match status" value="1"/>
</dbReference>
<dbReference type="Pfam" id="PF20309">
    <property type="entry name" value="DRHyd-ASK"/>
    <property type="match status" value="1"/>
</dbReference>
<dbReference type="Pfam" id="PF20302">
    <property type="entry name" value="HisK-N-like"/>
    <property type="match status" value="1"/>
</dbReference>
<dbReference type="Pfam" id="PF13281">
    <property type="entry name" value="MAP3K_TRAF_bd"/>
    <property type="match status" value="1"/>
</dbReference>
<dbReference type="Pfam" id="PF00069">
    <property type="entry name" value="Pkinase"/>
    <property type="match status" value="1"/>
</dbReference>
<dbReference type="SMART" id="SM00220">
    <property type="entry name" value="S_TKc"/>
    <property type="match status" value="1"/>
</dbReference>
<dbReference type="SUPFAM" id="SSF56112">
    <property type="entry name" value="Protein kinase-like (PK-like)"/>
    <property type="match status" value="1"/>
</dbReference>
<dbReference type="SUPFAM" id="SSF47769">
    <property type="entry name" value="SAM/Pointed domain"/>
    <property type="match status" value="1"/>
</dbReference>
<dbReference type="PROSITE" id="PS00107">
    <property type="entry name" value="PROTEIN_KINASE_ATP"/>
    <property type="match status" value="1"/>
</dbReference>
<dbReference type="PROSITE" id="PS50011">
    <property type="entry name" value="PROTEIN_KINASE_DOM"/>
    <property type="match status" value="1"/>
</dbReference>
<dbReference type="PROSITE" id="PS00108">
    <property type="entry name" value="PROTEIN_KINASE_ST"/>
    <property type="match status" value="1"/>
</dbReference>
<protein>
    <recommendedName>
        <fullName evidence="18">Mitogen-activated protein kinase kinase kinase nsy-1</fullName>
        <ecNumber evidence="4 5">2.7.11.25</ecNumber>
    </recommendedName>
    <alternativeName>
        <fullName evidence="17">Apoptosis signal-regulating kinase 1</fullName>
        <shortName evidence="17">ASK-1</shortName>
    </alternativeName>
    <alternativeName>
        <fullName evidence="20">Neuronal symmetry kinase 1</fullName>
    </alternativeName>
</protein>
<accession>Q21029</accession>
<sequence length="1498" mass="169654">MSQNNKRQVQHNHEMSNDVCPLPLPPRGAPPPTAYHASRMAATSSSTNGSFEKSAIPGNARKLHVVIVIDQKVQKNLRVREMALKDVQKVADTLNVNLTRIDFDKLDFGETETLDLFYNADVALVDVTVTHQQPSLCYHIGVRESMGQSYNMILTYWSPDPEYHIMDALKKTHAHLPMIVYIHHQDSNQLQSYDKNNNDDDSKPPFARTNVPAKTITFQHRMKQVLKSVQVEASAHSREKFMSDLRKAREITDGDQKNDYLDKMRTRLDNPDVLHPDTVSLMMLSYRDNQNYGGMIRLVDDLKRIPDCLKVVDTPVIRYQYAFALNRRNKDGDRDLALNTVLSLVEGTTENEEKNGPLSPDVVCLAGRIYKDKFIASNYEDRESLNSAIEWYRRAFEMSPLEYSGINLTTLLRASGEHFENNLEMQQIAVVLNSLLGRKGALQNLMEYWDVATYFEVSVLAENYQKACEAALMMVKLKPPVWYLKSTMENIKLINRCAATISPIEKEKQQFLFWSEFFMEATEADTDISCPRYPVLILELNKEFTPSYLTLNNEEGTVILSHVLENSQQKKIHQSELRGIHRWHFARNNIKAVTESKRDDRQLFLYVHENSDDFNLLFPTKAHCKKAYDDMKSMADVADGNYQGRVLSNPDNEKIRFEYELSNSNERVVLGKGTYGTVYAARDMDTQRQIVVKEIEVKYDEEVQPLMEEISLHSTLCHANIVQYLGCDLVGKDGSNDHFLIFMEHVPGGSLSSLLRSKWGPMNENAMNYYGKQILEGLKYLHELKIVHRDIKGDNVLVNTYSGVCKISDFGTCKRLAGLNPVTETFTGTLQYMAPEVIDHGQRGYGAPADIWSFGCTMVEMATGRPPFVEMQNPQAAMFRVGMFKTHPPIPTEITEKCRNFIKSCFLPEACDRPSAKDLLQDPFIYHNHHSISRTRSGSINKKPATKIELNHDKEKKEKSKNQREMLRSTSHIGGMGVVERSPPTPEPMSATLTAGFSHVHSQTVSNALSTAREEKKLHLKIDHARNRTFSSSSPVPDGQSSAGTNMSHPGFQLSQPSSPIVDDTNHPHLIVSPISLNTMGSPLSSAALLNRTISDESSNSSSRFFMLQKDSERRRSLGQFMQDYKDLIIDSWSTLLIKQSDTELVVTVYMLEMLLDGMRDFLLKKDNTKMQKMIDDIRGLLDYDTAKIGQINLALYHFSDSIQPVLRRLDIKPHWMFALSNLITSAVQCAISILSPDLSLLLHAQDNLPSTSSIVAIRNSSLSEGEALIESRPPSREERVREDRKELRTLQEENEILIERLLQVERELNAQLKSGITRANRFRDFAMYRNTYPPFRTPPVAHAPPTPPFSASCGAQPSGTFTNQPPSFASIKPIAQKIIMPPGTENNYQVTRVQEELVSWLRGLEIDERSIALIASEAYTKSDMMDFVTRDELLSIGVGGGSSCRIMRAIGEVRERQRRQPVFLSPMRSRDDSLDDYHSSSADDMYTGAAAETSSGN</sequence>
<keyword id="KW-0067">ATP-binding</keyword>
<keyword id="KW-0966">Cell projection</keyword>
<keyword id="KW-0175">Coiled coil</keyword>
<keyword id="KW-0418">Kinase</keyword>
<keyword id="KW-0460">Magnesium</keyword>
<keyword id="KW-0479">Metal-binding</keyword>
<keyword id="KW-0524">Neurogenesis</keyword>
<keyword id="KW-0547">Nucleotide-binding</keyword>
<keyword id="KW-0597">Phosphoprotein</keyword>
<keyword id="KW-1185">Reference proteome</keyword>
<keyword id="KW-0723">Serine/threonine-protein kinase</keyword>
<keyword id="KW-0346">Stress response</keyword>
<keyword id="KW-0808">Transferase</keyword>
<name>NSY1_CAEEL</name>
<organism evidence="19">
    <name type="scientific">Caenorhabditis elegans</name>
    <dbReference type="NCBI Taxonomy" id="6239"/>
    <lineage>
        <taxon>Eukaryota</taxon>
        <taxon>Metazoa</taxon>
        <taxon>Ecdysozoa</taxon>
        <taxon>Nematoda</taxon>
        <taxon>Chromadorea</taxon>
        <taxon>Rhabditida</taxon>
        <taxon>Rhabditina</taxon>
        <taxon>Rhabditomorpha</taxon>
        <taxon>Rhabditoidea</taxon>
        <taxon>Rhabditidae</taxon>
        <taxon>Peloderinae</taxon>
        <taxon>Caenorhabditis</taxon>
    </lineage>
</organism>